<sequence>MSGMRTLGEFIVEKQADFPHASGDLSSLLASIRLAAKIVNREINAAGLGDITGAVGTENVQGEAQQKLDVYANDKFKAALEARDQVCGVASEEEDEAVAFNKELNQNAKYVVLMDPLDGSSNIDVNVSVGTIFSIYRRVSPIGTPATEEDFLQPGHKQVAAGYVIYGSSTMLVYTTGNGVNGFTYDPSIGSFCLSHENMMIPEDGKIYSINEGNYIRFPQGVKKYIKYCQENVPEDGRPYTSRYIGSLVADFHRNLLKGGIYLYPSTQSHPQGKLRLLYECNPMAFLIEQAGGIASDGVNRIMDIKPTELHQRVPFFVGSKNMVRKVEEFLELHRDEE</sequence>
<protein>
    <recommendedName>
        <fullName evidence="1">Fructose-1,6-bisphosphatase class 1</fullName>
        <shortName evidence="1">FBPase class 1</shortName>
        <ecNumber evidence="1">3.1.3.11</ecNumber>
    </recommendedName>
    <alternativeName>
        <fullName evidence="1">D-fructose-1,6-bisphosphate 1-phosphohydrolase class 1</fullName>
    </alternativeName>
</protein>
<evidence type="ECO:0000255" key="1">
    <source>
        <dbReference type="HAMAP-Rule" id="MF_01855"/>
    </source>
</evidence>
<reference key="1">
    <citation type="journal article" date="2003" name="Lancet">
        <title>Genome sequence of Vibrio parahaemolyticus: a pathogenic mechanism distinct from that of V. cholerae.</title>
        <authorList>
            <person name="Makino K."/>
            <person name="Oshima K."/>
            <person name="Kurokawa K."/>
            <person name="Yokoyama K."/>
            <person name="Uda T."/>
            <person name="Tagomori K."/>
            <person name="Iijima Y."/>
            <person name="Najima M."/>
            <person name="Nakano M."/>
            <person name="Yamashita A."/>
            <person name="Kubota Y."/>
            <person name="Kimura S."/>
            <person name="Yasunaga T."/>
            <person name="Honda T."/>
            <person name="Shinagawa H."/>
            <person name="Hattori M."/>
            <person name="Iida T."/>
        </authorList>
    </citation>
    <scope>NUCLEOTIDE SEQUENCE [LARGE SCALE GENOMIC DNA]</scope>
    <source>
        <strain>RIMD 2210633</strain>
    </source>
</reference>
<organism>
    <name type="scientific">Vibrio parahaemolyticus serotype O3:K6 (strain RIMD 2210633)</name>
    <dbReference type="NCBI Taxonomy" id="223926"/>
    <lineage>
        <taxon>Bacteria</taxon>
        <taxon>Pseudomonadati</taxon>
        <taxon>Pseudomonadota</taxon>
        <taxon>Gammaproteobacteria</taxon>
        <taxon>Vibrionales</taxon>
        <taxon>Vibrionaceae</taxon>
        <taxon>Vibrio</taxon>
    </lineage>
</organism>
<gene>
    <name evidence="1" type="primary">fbp</name>
    <name type="ordered locus">VP0313</name>
</gene>
<feature type="chain" id="PRO_0000364743" description="Fructose-1,6-bisphosphatase class 1">
    <location>
        <begin position="1"/>
        <end position="338"/>
    </location>
</feature>
<feature type="binding site" evidence="1">
    <location>
        <position position="92"/>
    </location>
    <ligand>
        <name>Mg(2+)</name>
        <dbReference type="ChEBI" id="CHEBI:18420"/>
        <label>1</label>
    </ligand>
</feature>
<feature type="binding site" evidence="1">
    <location>
        <position position="115"/>
    </location>
    <ligand>
        <name>Mg(2+)</name>
        <dbReference type="ChEBI" id="CHEBI:18420"/>
        <label>1</label>
    </ligand>
</feature>
<feature type="binding site" evidence="1">
    <location>
        <position position="115"/>
    </location>
    <ligand>
        <name>Mg(2+)</name>
        <dbReference type="ChEBI" id="CHEBI:18420"/>
        <label>2</label>
    </ligand>
</feature>
<feature type="binding site" evidence="1">
    <location>
        <position position="117"/>
    </location>
    <ligand>
        <name>Mg(2+)</name>
        <dbReference type="ChEBI" id="CHEBI:18420"/>
        <label>1</label>
    </ligand>
</feature>
<feature type="binding site" evidence="1">
    <location>
        <begin position="118"/>
        <end position="121"/>
    </location>
    <ligand>
        <name>substrate</name>
    </ligand>
</feature>
<feature type="binding site" evidence="1">
    <location>
        <position position="118"/>
    </location>
    <ligand>
        <name>Mg(2+)</name>
        <dbReference type="ChEBI" id="CHEBI:18420"/>
        <label>2</label>
    </ligand>
</feature>
<feature type="binding site" evidence="1">
    <location>
        <position position="211"/>
    </location>
    <ligand>
        <name>substrate</name>
    </ligand>
</feature>
<feature type="binding site" evidence="1">
    <location>
        <position position="244"/>
    </location>
    <ligand>
        <name>substrate</name>
    </ligand>
</feature>
<feature type="binding site" evidence="1">
    <location>
        <begin position="262"/>
        <end position="264"/>
    </location>
    <ligand>
        <name>substrate</name>
    </ligand>
</feature>
<feature type="binding site" evidence="1">
    <location>
        <position position="274"/>
    </location>
    <ligand>
        <name>substrate</name>
    </ligand>
</feature>
<feature type="binding site" evidence="1">
    <location>
        <position position="280"/>
    </location>
    <ligand>
        <name>Mg(2+)</name>
        <dbReference type="ChEBI" id="CHEBI:18420"/>
        <label>2</label>
    </ligand>
</feature>
<accession>Q87SW0</accession>
<proteinExistence type="inferred from homology"/>
<keyword id="KW-0119">Carbohydrate metabolism</keyword>
<keyword id="KW-0963">Cytoplasm</keyword>
<keyword id="KW-0378">Hydrolase</keyword>
<keyword id="KW-0460">Magnesium</keyword>
<keyword id="KW-0479">Metal-binding</keyword>
<dbReference type="EC" id="3.1.3.11" evidence="1"/>
<dbReference type="EMBL" id="BA000031">
    <property type="protein sequence ID" value="BAC58575.1"/>
    <property type="molecule type" value="Genomic_DNA"/>
</dbReference>
<dbReference type="RefSeq" id="NP_796691.1">
    <property type="nucleotide sequence ID" value="NC_004603.1"/>
</dbReference>
<dbReference type="RefSeq" id="WP_005454699.1">
    <property type="nucleotide sequence ID" value="NC_004603.1"/>
</dbReference>
<dbReference type="SMR" id="Q87SW0"/>
<dbReference type="GeneID" id="1187779"/>
<dbReference type="KEGG" id="vpa:VP0313"/>
<dbReference type="PATRIC" id="fig|223926.6.peg.301"/>
<dbReference type="eggNOG" id="COG0158">
    <property type="taxonomic scope" value="Bacteria"/>
</dbReference>
<dbReference type="HOGENOM" id="CLU_039977_2_2_6"/>
<dbReference type="UniPathway" id="UPA00138"/>
<dbReference type="Proteomes" id="UP000002493">
    <property type="component" value="Chromosome 1"/>
</dbReference>
<dbReference type="GO" id="GO:0005829">
    <property type="term" value="C:cytosol"/>
    <property type="evidence" value="ECO:0007669"/>
    <property type="project" value="TreeGrafter"/>
</dbReference>
<dbReference type="GO" id="GO:0042132">
    <property type="term" value="F:fructose 1,6-bisphosphate 1-phosphatase activity"/>
    <property type="evidence" value="ECO:0007669"/>
    <property type="project" value="UniProtKB-UniRule"/>
</dbReference>
<dbReference type="GO" id="GO:0000287">
    <property type="term" value="F:magnesium ion binding"/>
    <property type="evidence" value="ECO:0007669"/>
    <property type="project" value="UniProtKB-UniRule"/>
</dbReference>
<dbReference type="GO" id="GO:0030388">
    <property type="term" value="P:fructose 1,6-bisphosphate metabolic process"/>
    <property type="evidence" value="ECO:0007669"/>
    <property type="project" value="TreeGrafter"/>
</dbReference>
<dbReference type="GO" id="GO:0006002">
    <property type="term" value="P:fructose 6-phosphate metabolic process"/>
    <property type="evidence" value="ECO:0007669"/>
    <property type="project" value="TreeGrafter"/>
</dbReference>
<dbReference type="GO" id="GO:0006000">
    <property type="term" value="P:fructose metabolic process"/>
    <property type="evidence" value="ECO:0007669"/>
    <property type="project" value="TreeGrafter"/>
</dbReference>
<dbReference type="GO" id="GO:0006094">
    <property type="term" value="P:gluconeogenesis"/>
    <property type="evidence" value="ECO:0007669"/>
    <property type="project" value="UniProtKB-UniRule"/>
</dbReference>
<dbReference type="GO" id="GO:0005986">
    <property type="term" value="P:sucrose biosynthetic process"/>
    <property type="evidence" value="ECO:0007669"/>
    <property type="project" value="TreeGrafter"/>
</dbReference>
<dbReference type="CDD" id="cd00354">
    <property type="entry name" value="FBPase"/>
    <property type="match status" value="1"/>
</dbReference>
<dbReference type="FunFam" id="3.30.540.10:FF:000002">
    <property type="entry name" value="Fructose-1,6-bisphosphatase class 1"/>
    <property type="match status" value="1"/>
</dbReference>
<dbReference type="FunFam" id="3.40.190.80:FF:000001">
    <property type="entry name" value="Fructose-1,6-bisphosphatase class 1"/>
    <property type="match status" value="1"/>
</dbReference>
<dbReference type="Gene3D" id="3.40.190.80">
    <property type="match status" value="1"/>
</dbReference>
<dbReference type="Gene3D" id="3.30.540.10">
    <property type="entry name" value="Fructose-1,6-Bisphosphatase, subunit A, domain 1"/>
    <property type="match status" value="1"/>
</dbReference>
<dbReference type="HAMAP" id="MF_01855">
    <property type="entry name" value="FBPase_class1"/>
    <property type="match status" value="1"/>
</dbReference>
<dbReference type="InterPro" id="IPR044015">
    <property type="entry name" value="FBPase_C_dom"/>
</dbReference>
<dbReference type="InterPro" id="IPR000146">
    <property type="entry name" value="FBPase_class-1"/>
</dbReference>
<dbReference type="InterPro" id="IPR033391">
    <property type="entry name" value="FBPase_N"/>
</dbReference>
<dbReference type="InterPro" id="IPR028343">
    <property type="entry name" value="FBPtase"/>
</dbReference>
<dbReference type="InterPro" id="IPR020548">
    <property type="entry name" value="Fructose_bisphosphatase_AS"/>
</dbReference>
<dbReference type="NCBIfam" id="NF006778">
    <property type="entry name" value="PRK09293.1-1"/>
    <property type="match status" value="1"/>
</dbReference>
<dbReference type="NCBIfam" id="NF006779">
    <property type="entry name" value="PRK09293.1-3"/>
    <property type="match status" value="1"/>
</dbReference>
<dbReference type="PANTHER" id="PTHR11556">
    <property type="entry name" value="FRUCTOSE-1,6-BISPHOSPHATASE-RELATED"/>
    <property type="match status" value="1"/>
</dbReference>
<dbReference type="PANTHER" id="PTHR11556:SF35">
    <property type="entry name" value="SEDOHEPTULOSE-1,7-BISPHOSPHATASE, CHLOROPLASTIC"/>
    <property type="match status" value="1"/>
</dbReference>
<dbReference type="Pfam" id="PF00316">
    <property type="entry name" value="FBPase"/>
    <property type="match status" value="1"/>
</dbReference>
<dbReference type="Pfam" id="PF18913">
    <property type="entry name" value="FBPase_C"/>
    <property type="match status" value="1"/>
</dbReference>
<dbReference type="PIRSF" id="PIRSF500210">
    <property type="entry name" value="FBPtase"/>
    <property type="match status" value="1"/>
</dbReference>
<dbReference type="PIRSF" id="PIRSF000904">
    <property type="entry name" value="FBPtase_SBPase"/>
    <property type="match status" value="1"/>
</dbReference>
<dbReference type="PRINTS" id="PR00115">
    <property type="entry name" value="F16BPHPHTASE"/>
</dbReference>
<dbReference type="SUPFAM" id="SSF56655">
    <property type="entry name" value="Carbohydrate phosphatase"/>
    <property type="match status" value="1"/>
</dbReference>
<dbReference type="PROSITE" id="PS00124">
    <property type="entry name" value="FBPASE"/>
    <property type="match status" value="1"/>
</dbReference>
<name>F16PA_VIBPA</name>
<comment type="catalytic activity">
    <reaction evidence="1">
        <text>beta-D-fructose 1,6-bisphosphate + H2O = beta-D-fructose 6-phosphate + phosphate</text>
        <dbReference type="Rhea" id="RHEA:11064"/>
        <dbReference type="ChEBI" id="CHEBI:15377"/>
        <dbReference type="ChEBI" id="CHEBI:32966"/>
        <dbReference type="ChEBI" id="CHEBI:43474"/>
        <dbReference type="ChEBI" id="CHEBI:57634"/>
        <dbReference type="EC" id="3.1.3.11"/>
    </reaction>
</comment>
<comment type="cofactor">
    <cofactor evidence="1">
        <name>Mg(2+)</name>
        <dbReference type="ChEBI" id="CHEBI:18420"/>
    </cofactor>
    <text evidence="1">Binds 2 magnesium ions per subunit.</text>
</comment>
<comment type="pathway">
    <text evidence="1">Carbohydrate biosynthesis; gluconeogenesis.</text>
</comment>
<comment type="subunit">
    <text evidence="1">Homotetramer.</text>
</comment>
<comment type="subcellular location">
    <subcellularLocation>
        <location evidence="1">Cytoplasm</location>
    </subcellularLocation>
</comment>
<comment type="similarity">
    <text evidence="1">Belongs to the FBPase class 1 family.</text>
</comment>